<sequence length="406" mass="46173">MTNAQPTELISLPSELLCHLFTYLPQRQLITEIPLVCRRFNTILNDDKFWSRRIRTEQKVRLPDCELKHPEYEPKKSFYAMHRQRDRWRAWETQTVITAPGHSATVDSVMLFENNNKQFCLSGSRDRTIRLWSIENARNGEDTEQNPWTVAKDDTAHSGWIWNMAQESTSTNFYTTSWDSTVKSWHITDNGALQNLNSVNVGSAAQCISCSGNENEVVCTTFAKRVAVIDSRTFQVVADHKLHKRAVIALAVQGDKIFTSGEDRLMMMVDRRNFSKPVLFEYSPTAYKSCLSLQCNQLLTSTSDGKVKLYDANNFNVLQTYSVGSYTRQSFLEHGAHLIMARSLKRNYTFSIYSPGTRSQQWCASHELAAEPAKFDYSPSSRTLAIGNGDSSILFCLPASAPDQEN</sequence>
<reference evidence="8" key="1">
    <citation type="journal article" date="1998" name="Science">
        <title>Genome sequence of the nematode C. elegans: a platform for investigating biology.</title>
        <authorList>
            <consortium name="The C. elegans sequencing consortium"/>
        </authorList>
    </citation>
    <scope>NUCLEOTIDE SEQUENCE [LARGE SCALE GENOMIC DNA]</scope>
    <source>
        <strain evidence="8">Bristol N2</strain>
    </source>
</reference>
<reference evidence="7" key="2">
    <citation type="journal article" date="1996" name="Proc. Natl. Acad. Sci. U.S.A.">
        <title>Genetic interactions affecting touch sensitivity in Caenorhabditis elegans.</title>
        <authorList>
            <person name="Gu G."/>
            <person name="Caldwell G.A."/>
            <person name="Chalfie M."/>
        </authorList>
    </citation>
    <scope>FUNCTION</scope>
    <scope>DISRUPTION PHENOTYPE</scope>
</reference>
<reference evidence="7" key="3">
    <citation type="journal article" date="2002" name="Curr. Biol.">
        <title>Multiple Skp1-related proteins in Caenorhabditis elegans: diverse patterns of interaction with Cullins and F-box proteins.</title>
        <authorList>
            <person name="Yamanaka A."/>
            <person name="Yada M."/>
            <person name="Imaki H."/>
            <person name="Koga M."/>
            <person name="Ohshima Y."/>
            <person name="Nakayama K."/>
        </authorList>
    </citation>
    <scope>INTERACTION WITH SKR-1</scope>
</reference>
<reference evidence="7" key="4">
    <citation type="journal article" date="2009" name="Genetics">
        <title>mec-15 encodes an F-box protein required for touch receptor neuron mechanosensation, synapse formation and development.</title>
        <authorList>
            <person name="Bounoutas A."/>
            <person name="Zheng Q."/>
            <person name="Nonet M.L."/>
            <person name="Chalfie M."/>
        </authorList>
    </citation>
    <scope>FUNCTION</scope>
    <scope>TISSUE SPECIFICITY</scope>
    <scope>DEVELOPMENTAL STAGE</scope>
    <scope>DISRUPTION PHENOTYPE</scope>
</reference>
<reference evidence="7" key="5">
    <citation type="journal article" date="2013" name="PLoS ONE">
        <title>The F-box protein MEC-15 (FBXW9) promotes synaptic transmission in GABAergic motor neurons in C. elegans.</title>
        <authorList>
            <person name="Sun Y."/>
            <person name="Hu Z."/>
            <person name="Goeb Y."/>
            <person name="Dreier L."/>
        </authorList>
    </citation>
    <scope>FUNCTION</scope>
    <scope>SUBCELLULAR LOCATION</scope>
    <scope>TISSUE SPECIFICITY</scope>
    <scope>DISRUPTION PHENOTYPE</scope>
</reference>
<organism evidence="8">
    <name type="scientific">Caenorhabditis elegans</name>
    <dbReference type="NCBI Taxonomy" id="6239"/>
    <lineage>
        <taxon>Eukaryota</taxon>
        <taxon>Metazoa</taxon>
        <taxon>Ecdysozoa</taxon>
        <taxon>Nematoda</taxon>
        <taxon>Chromadorea</taxon>
        <taxon>Rhabditida</taxon>
        <taxon>Rhabditina</taxon>
        <taxon>Rhabditomorpha</taxon>
        <taxon>Rhabditoidea</taxon>
        <taxon>Rhabditidae</taxon>
        <taxon>Peloderinae</taxon>
        <taxon>Caenorhabditis</taxon>
    </lineage>
</organism>
<dbReference type="EMBL" id="BX284602">
    <property type="protein sequence ID" value="CAA88747.1"/>
    <property type="molecule type" value="Genomic_DNA"/>
</dbReference>
<dbReference type="PIR" id="T24301">
    <property type="entry name" value="T24301"/>
</dbReference>
<dbReference type="RefSeq" id="NP_496207.1">
    <property type="nucleotide sequence ID" value="NM_063806.7"/>
</dbReference>
<dbReference type="SMR" id="Q22071"/>
<dbReference type="FunCoup" id="Q22071">
    <property type="interactions" value="557"/>
</dbReference>
<dbReference type="STRING" id="6239.T01E8.4.1"/>
<dbReference type="PaxDb" id="6239-T01E8.4"/>
<dbReference type="PeptideAtlas" id="Q22071"/>
<dbReference type="EnsemblMetazoa" id="T01E8.4.1">
    <property type="protein sequence ID" value="T01E8.4.1"/>
    <property type="gene ID" value="WBGene00003177"/>
</dbReference>
<dbReference type="GeneID" id="174587"/>
<dbReference type="KEGG" id="cel:CELE_T01E8.4"/>
<dbReference type="UCSC" id="T01E8.4">
    <property type="organism name" value="c. elegans"/>
</dbReference>
<dbReference type="AGR" id="WB:WBGene00003177"/>
<dbReference type="CTD" id="174587"/>
<dbReference type="WormBase" id="T01E8.4">
    <property type="protein sequence ID" value="CE02308"/>
    <property type="gene ID" value="WBGene00003177"/>
    <property type="gene designation" value="mec-15"/>
</dbReference>
<dbReference type="eggNOG" id="KOG0274">
    <property type="taxonomic scope" value="Eukaryota"/>
</dbReference>
<dbReference type="GeneTree" id="ENSGT00940000173961"/>
<dbReference type="HOGENOM" id="CLU_064154_0_0_1"/>
<dbReference type="InParanoid" id="Q22071"/>
<dbReference type="OMA" id="WAGDNGG"/>
<dbReference type="OrthoDB" id="2305498at2759"/>
<dbReference type="PhylomeDB" id="Q22071"/>
<dbReference type="Reactome" id="R-CEL-8951664">
    <property type="pathway name" value="Neddylation"/>
</dbReference>
<dbReference type="Reactome" id="R-CEL-983168">
    <property type="pathway name" value="Antigen processing: Ubiquitination &amp; Proteasome degradation"/>
</dbReference>
<dbReference type="PRO" id="PR:Q22071"/>
<dbReference type="Proteomes" id="UP000001940">
    <property type="component" value="Chromosome II"/>
</dbReference>
<dbReference type="Bgee" id="WBGene00003177">
    <property type="expression patterns" value="Expressed in germ line (C elegans) and 4 other cell types or tissues"/>
</dbReference>
<dbReference type="GO" id="GO:0043204">
    <property type="term" value="C:perikaryon"/>
    <property type="evidence" value="ECO:0000314"/>
    <property type="project" value="UniProtKB"/>
</dbReference>
<dbReference type="GO" id="GO:0098793">
    <property type="term" value="C:presynapse"/>
    <property type="evidence" value="ECO:0007669"/>
    <property type="project" value="GOC"/>
</dbReference>
<dbReference type="GO" id="GO:0050976">
    <property type="term" value="P:detection of mechanical stimulus involved in sensory perception of touch"/>
    <property type="evidence" value="ECO:0000316"/>
    <property type="project" value="UniProtKB"/>
</dbReference>
<dbReference type="GO" id="GO:0007638">
    <property type="term" value="P:mechanosensory behavior"/>
    <property type="evidence" value="ECO:0000316"/>
    <property type="project" value="UniProtKB"/>
</dbReference>
<dbReference type="GO" id="GO:0048666">
    <property type="term" value="P:neuron development"/>
    <property type="evidence" value="ECO:0000315"/>
    <property type="project" value="WormBase"/>
</dbReference>
<dbReference type="GO" id="GO:1905789">
    <property type="term" value="P:positive regulation of detection of mechanical stimulus involved in sensory perception of touch"/>
    <property type="evidence" value="ECO:0000316"/>
    <property type="project" value="UniProtKB"/>
</dbReference>
<dbReference type="GO" id="GO:0097151">
    <property type="term" value="P:positive regulation of inhibitory postsynaptic potential"/>
    <property type="evidence" value="ECO:0000315"/>
    <property type="project" value="UniProtKB"/>
</dbReference>
<dbReference type="GO" id="GO:1905792">
    <property type="term" value="P:positive regulation of mechanosensory behavior"/>
    <property type="evidence" value="ECO:0000316"/>
    <property type="project" value="UniProtKB"/>
</dbReference>
<dbReference type="GO" id="GO:0045933">
    <property type="term" value="P:positive regulation of muscle contraction"/>
    <property type="evidence" value="ECO:0000315"/>
    <property type="project" value="UniProtKB"/>
</dbReference>
<dbReference type="GO" id="GO:0032230">
    <property type="term" value="P:positive regulation of synaptic transmission, GABAergic"/>
    <property type="evidence" value="ECO:0000315"/>
    <property type="project" value="UniProtKB"/>
</dbReference>
<dbReference type="GO" id="GO:1902805">
    <property type="term" value="P:positive regulation of synaptic vesicle transport"/>
    <property type="evidence" value="ECO:0000315"/>
    <property type="project" value="WormBase"/>
</dbReference>
<dbReference type="GO" id="GO:0016080">
    <property type="term" value="P:synaptic vesicle targeting"/>
    <property type="evidence" value="ECO:0000315"/>
    <property type="project" value="UniProtKB"/>
</dbReference>
<dbReference type="Gene3D" id="1.20.1280.50">
    <property type="match status" value="1"/>
</dbReference>
<dbReference type="Gene3D" id="2.130.10.10">
    <property type="entry name" value="YVTN repeat-like/Quinoprotein amine dehydrogenase"/>
    <property type="match status" value="2"/>
</dbReference>
<dbReference type="InterPro" id="IPR036047">
    <property type="entry name" value="F-box-like_dom_sf"/>
</dbReference>
<dbReference type="InterPro" id="IPR001810">
    <property type="entry name" value="F-box_dom"/>
</dbReference>
<dbReference type="InterPro" id="IPR015943">
    <property type="entry name" value="WD40/YVTN_repeat-like_dom_sf"/>
</dbReference>
<dbReference type="InterPro" id="IPR036322">
    <property type="entry name" value="WD40_repeat_dom_sf"/>
</dbReference>
<dbReference type="InterPro" id="IPR001680">
    <property type="entry name" value="WD40_rpt"/>
</dbReference>
<dbReference type="PANTHER" id="PTHR19855:SF33">
    <property type="entry name" value="F-BOX_WD REPEAT-CONTAINING PROTEIN MEC-15"/>
    <property type="match status" value="1"/>
</dbReference>
<dbReference type="PANTHER" id="PTHR19855">
    <property type="entry name" value="WD40 REPEAT PROTEIN 12, 37"/>
    <property type="match status" value="1"/>
</dbReference>
<dbReference type="Pfam" id="PF12937">
    <property type="entry name" value="F-box-like"/>
    <property type="match status" value="1"/>
</dbReference>
<dbReference type="Pfam" id="PF00400">
    <property type="entry name" value="WD40"/>
    <property type="match status" value="2"/>
</dbReference>
<dbReference type="SMART" id="SM00256">
    <property type="entry name" value="FBOX"/>
    <property type="match status" value="1"/>
</dbReference>
<dbReference type="SMART" id="SM00320">
    <property type="entry name" value="WD40"/>
    <property type="match status" value="4"/>
</dbReference>
<dbReference type="SUPFAM" id="SSF81383">
    <property type="entry name" value="F-box domain"/>
    <property type="match status" value="1"/>
</dbReference>
<dbReference type="SUPFAM" id="SSF50978">
    <property type="entry name" value="WD40 repeat-like"/>
    <property type="match status" value="1"/>
</dbReference>
<dbReference type="PROSITE" id="PS50181">
    <property type="entry name" value="FBOX"/>
    <property type="match status" value="1"/>
</dbReference>
<dbReference type="PROSITE" id="PS50082">
    <property type="entry name" value="WD_REPEATS_2"/>
    <property type="match status" value="1"/>
</dbReference>
<dbReference type="PROSITE" id="PS50294">
    <property type="entry name" value="WD_REPEATS_REGION"/>
    <property type="match status" value="1"/>
</dbReference>
<comment type="function">
    <text evidence="4 5 6">Plays a role in mechanosensory transduction (touch sensitivity), touch receptor neuron development and synapse formation (PubMed:19652181, PubMed:8692859). Regulates expression of the protein snb-1 and the distribution of synaptic vesicles at synapses to promote synaptic transmission at the neuromuscular junctions of GABAergic motor neurons (PubMed:23527112).</text>
</comment>
<comment type="subunit">
    <text evidence="3">May interact with the SCF ubiquitin ligase complex component skr-1.</text>
</comment>
<comment type="subcellular location">
    <subcellularLocation>
        <location evidence="5">Perikaryon</location>
    </subcellularLocation>
</comment>
<comment type="tissue specificity">
    <text evidence="4 5">Expressed in several neurons in the head, tail and ventral cord, but absent in touch receptor neurons in adults (PubMed:19652181, PubMed:23527112). Expressed in GABAergic and cholinergic motor neurons (PubMed:23527112).</text>
</comment>
<comment type="developmental stage">
    <text evidence="4">Expressed in touch receptor neurons and several neurons in the head, tail and ventral cord during larval development.</text>
</comment>
<comment type="disruption phenotype">
    <text evidence="4 5 6">Temperature-sensitive phenotype with defective touch receptor neuron synaptic transmission conferring variable degrees of touch insensitivity amongst individual animals (PubMed:19652181, PubMed:8692859). Touch receptor neurons and GABAergic motor neurons have mis-localized presynaptic vesicles as indicated by aberrant expression of the protein snb-1 and distorted cell bodies (PubMed:19652181, PubMed:23527112). Reduced rate of inhibitory postsynaptic currents at the neuromuscular junctions of GABAergic motor neurons (PubMed:23527112). No effects on cholinergic synaptic transmission or snb-1 distribution in cholinergic motor neurons (PubMed:23527112). Increased rate of paralysis, in response to acetylcholine esterase inhibition by the drug Aldicarb, due to increased accumulation of acetylcholine in the extracellular fluid resulting permanent contraction of body wall muscles (PubMed:23527112). Knockout with a mec-7 heterozygous mutant, but not a null mec-7 mutant, rescues the touch sensitivity defect in the mec-15 single mutant (PubMed:19652181).</text>
</comment>
<evidence type="ECO:0000255" key="1"/>
<evidence type="ECO:0000255" key="2">
    <source>
        <dbReference type="PROSITE-ProRule" id="PRU00080"/>
    </source>
</evidence>
<evidence type="ECO:0000269" key="3">
    <source>
    </source>
</evidence>
<evidence type="ECO:0000269" key="4">
    <source>
    </source>
</evidence>
<evidence type="ECO:0000269" key="5">
    <source>
    </source>
</evidence>
<evidence type="ECO:0000269" key="6">
    <source>
    </source>
</evidence>
<evidence type="ECO:0000305" key="7"/>
<evidence type="ECO:0000312" key="8">
    <source>
        <dbReference type="Proteomes" id="UP000001940"/>
    </source>
</evidence>
<evidence type="ECO:0000312" key="9">
    <source>
        <dbReference type="WormBase" id="T01E8.4"/>
    </source>
</evidence>
<accession>Q22071</accession>
<feature type="chain" id="PRO_0000442206" description="F-box/WD repeat-containing protein mec-15" evidence="7">
    <location>
        <begin position="1"/>
        <end position="406"/>
    </location>
</feature>
<feature type="domain" description="F-box" evidence="2">
    <location>
        <begin position="6"/>
        <end position="53"/>
    </location>
</feature>
<feature type="repeat" description="WD 1" evidence="1">
    <location>
        <begin position="101"/>
        <end position="142"/>
    </location>
</feature>
<feature type="repeat" description="WD 2" evidence="1">
    <location>
        <begin position="156"/>
        <end position="195"/>
    </location>
</feature>
<feature type="repeat" description="WD 3" evidence="1">
    <location>
        <begin position="242"/>
        <end position="279"/>
    </location>
</feature>
<feature type="repeat" description="WD 4" evidence="1">
    <location>
        <begin position="281"/>
        <end position="320"/>
    </location>
</feature>
<feature type="repeat" description="WD 5" evidence="1">
    <location>
        <begin position="365"/>
        <end position="406"/>
    </location>
</feature>
<keyword id="KW-1185">Reference proteome</keyword>
<keyword id="KW-0677">Repeat</keyword>
<keyword id="KW-0853">WD repeat</keyword>
<gene>
    <name evidence="9" type="primary">mec-15</name>
    <name evidence="9" type="ORF">T01E8.4</name>
</gene>
<protein>
    <recommendedName>
        <fullName evidence="7">F-box/WD repeat-containing protein mec-15</fullName>
    </recommendedName>
    <alternativeName>
        <fullName evidence="9">Mechanosensory abnormality protein 15</fullName>
    </alternativeName>
</protein>
<proteinExistence type="evidence at protein level"/>
<name>MEC15_CAEEL</name>